<organism>
    <name type="scientific">Shewanella baltica (strain OS223)</name>
    <dbReference type="NCBI Taxonomy" id="407976"/>
    <lineage>
        <taxon>Bacteria</taxon>
        <taxon>Pseudomonadati</taxon>
        <taxon>Pseudomonadota</taxon>
        <taxon>Gammaproteobacteria</taxon>
        <taxon>Alteromonadales</taxon>
        <taxon>Shewanellaceae</taxon>
        <taxon>Shewanella</taxon>
    </lineage>
</organism>
<keyword id="KW-0378">Hydrolase</keyword>
<proteinExistence type="inferred from homology"/>
<accession>B8EBR9</accession>
<gene>
    <name evidence="1" type="primary">rppH</name>
    <name evidence="1" type="synonym">nudH</name>
    <name type="ordered locus">Sbal223_3129</name>
</gene>
<dbReference type="EC" id="3.6.1.-" evidence="1"/>
<dbReference type="EMBL" id="CP001252">
    <property type="protein sequence ID" value="ACK47614.1"/>
    <property type="molecule type" value="Genomic_DNA"/>
</dbReference>
<dbReference type="RefSeq" id="WP_006080762.1">
    <property type="nucleotide sequence ID" value="NC_011663.1"/>
</dbReference>
<dbReference type="SMR" id="B8EBR9"/>
<dbReference type="GeneID" id="11771531"/>
<dbReference type="KEGG" id="sbp:Sbal223_3129"/>
<dbReference type="HOGENOM" id="CLU_087195_3_1_6"/>
<dbReference type="Proteomes" id="UP000002507">
    <property type="component" value="Chromosome"/>
</dbReference>
<dbReference type="GO" id="GO:0005737">
    <property type="term" value="C:cytoplasm"/>
    <property type="evidence" value="ECO:0007669"/>
    <property type="project" value="TreeGrafter"/>
</dbReference>
<dbReference type="GO" id="GO:0034353">
    <property type="term" value="F:mRNA 5'-diphosphatase activity"/>
    <property type="evidence" value="ECO:0007669"/>
    <property type="project" value="TreeGrafter"/>
</dbReference>
<dbReference type="GO" id="GO:0006402">
    <property type="term" value="P:mRNA catabolic process"/>
    <property type="evidence" value="ECO:0007669"/>
    <property type="project" value="TreeGrafter"/>
</dbReference>
<dbReference type="CDD" id="cd03671">
    <property type="entry name" value="NUDIX_Ap4A_hydrolase_plant_like"/>
    <property type="match status" value="1"/>
</dbReference>
<dbReference type="FunFam" id="3.90.79.10:FF:000001">
    <property type="entry name" value="RNA pyrophosphohydrolase"/>
    <property type="match status" value="1"/>
</dbReference>
<dbReference type="Gene3D" id="3.90.79.10">
    <property type="entry name" value="Nucleoside Triphosphate Pyrophosphohydrolase"/>
    <property type="match status" value="1"/>
</dbReference>
<dbReference type="HAMAP" id="MF_00298">
    <property type="entry name" value="Nudix_RppH"/>
    <property type="match status" value="1"/>
</dbReference>
<dbReference type="InterPro" id="IPR020476">
    <property type="entry name" value="Nudix_hydrolase"/>
</dbReference>
<dbReference type="InterPro" id="IPR015797">
    <property type="entry name" value="NUDIX_hydrolase-like_dom_sf"/>
</dbReference>
<dbReference type="InterPro" id="IPR020084">
    <property type="entry name" value="NUDIX_hydrolase_CS"/>
</dbReference>
<dbReference type="InterPro" id="IPR000086">
    <property type="entry name" value="NUDIX_hydrolase_dom"/>
</dbReference>
<dbReference type="InterPro" id="IPR022927">
    <property type="entry name" value="RppH"/>
</dbReference>
<dbReference type="NCBIfam" id="NF001934">
    <property type="entry name" value="PRK00714.1-1"/>
    <property type="match status" value="1"/>
</dbReference>
<dbReference type="NCBIfam" id="NF001937">
    <property type="entry name" value="PRK00714.1-4"/>
    <property type="match status" value="1"/>
</dbReference>
<dbReference type="NCBIfam" id="NF001938">
    <property type="entry name" value="PRK00714.1-5"/>
    <property type="match status" value="1"/>
</dbReference>
<dbReference type="PANTHER" id="PTHR23114">
    <property type="entry name" value="M7GPPPN-MRNA HYDROLASE"/>
    <property type="match status" value="1"/>
</dbReference>
<dbReference type="PANTHER" id="PTHR23114:SF17">
    <property type="entry name" value="M7GPPPN-MRNA HYDROLASE"/>
    <property type="match status" value="1"/>
</dbReference>
<dbReference type="Pfam" id="PF00293">
    <property type="entry name" value="NUDIX"/>
    <property type="match status" value="1"/>
</dbReference>
<dbReference type="PRINTS" id="PR00502">
    <property type="entry name" value="NUDIXFAMILY"/>
</dbReference>
<dbReference type="SUPFAM" id="SSF55811">
    <property type="entry name" value="Nudix"/>
    <property type="match status" value="1"/>
</dbReference>
<dbReference type="PROSITE" id="PS51462">
    <property type="entry name" value="NUDIX"/>
    <property type="match status" value="1"/>
</dbReference>
<dbReference type="PROSITE" id="PS00893">
    <property type="entry name" value="NUDIX_BOX"/>
    <property type="match status" value="1"/>
</dbReference>
<evidence type="ECO:0000255" key="1">
    <source>
        <dbReference type="HAMAP-Rule" id="MF_00298"/>
    </source>
</evidence>
<feature type="chain" id="PRO_1000191849" description="RNA pyrophosphohydrolase">
    <location>
        <begin position="1"/>
        <end position="174"/>
    </location>
</feature>
<feature type="domain" description="Nudix hydrolase" evidence="1">
    <location>
        <begin position="6"/>
        <end position="149"/>
    </location>
</feature>
<feature type="short sequence motif" description="Nudix box">
    <location>
        <begin position="38"/>
        <end position="59"/>
    </location>
</feature>
<reference key="1">
    <citation type="submission" date="2008-12" db="EMBL/GenBank/DDBJ databases">
        <title>Complete sequence of chromosome of Shewanella baltica OS223.</title>
        <authorList>
            <consortium name="US DOE Joint Genome Institute"/>
            <person name="Lucas S."/>
            <person name="Copeland A."/>
            <person name="Lapidus A."/>
            <person name="Glavina del Rio T."/>
            <person name="Dalin E."/>
            <person name="Tice H."/>
            <person name="Bruce D."/>
            <person name="Goodwin L."/>
            <person name="Pitluck S."/>
            <person name="Chertkov O."/>
            <person name="Meincke L."/>
            <person name="Brettin T."/>
            <person name="Detter J.C."/>
            <person name="Han C."/>
            <person name="Kuske C.R."/>
            <person name="Larimer F."/>
            <person name="Land M."/>
            <person name="Hauser L."/>
            <person name="Kyrpides N."/>
            <person name="Ovchinnikova G."/>
            <person name="Brettar I."/>
            <person name="Rodrigues J."/>
            <person name="Konstantinidis K."/>
            <person name="Tiedje J."/>
        </authorList>
    </citation>
    <scope>NUCLEOTIDE SEQUENCE [LARGE SCALE GENOMIC DNA]</scope>
    <source>
        <strain>OS223</strain>
    </source>
</reference>
<sequence>MIDSDGFRANVGIIICNRYGQVMWARRFGQHSWQFPQGGVDDGETAEEAMYRELYEEVGLRPEHVHILTSTRSWLRYRLPKRLVRQDSKPVCIGQKQKWFLLQLKSQDSAINLSSSGHPEFDDWRWVSYWYPVRQVVSFKRDVYRKVMKEFAVTALSFQTLEIPRKRGRQKTTG</sequence>
<comment type="function">
    <text evidence="1">Accelerates the degradation of transcripts by removing pyrophosphate from the 5'-end of triphosphorylated RNA, leading to a more labile monophosphorylated state that can stimulate subsequent ribonuclease cleavage.</text>
</comment>
<comment type="cofactor">
    <cofactor evidence="1">
        <name>a divalent metal cation</name>
        <dbReference type="ChEBI" id="CHEBI:60240"/>
    </cofactor>
</comment>
<comment type="similarity">
    <text evidence="1">Belongs to the Nudix hydrolase family. RppH subfamily.</text>
</comment>
<protein>
    <recommendedName>
        <fullName evidence="1">RNA pyrophosphohydrolase</fullName>
        <ecNumber evidence="1">3.6.1.-</ecNumber>
    </recommendedName>
    <alternativeName>
        <fullName evidence="1">(Di)nucleoside polyphosphate hydrolase</fullName>
    </alternativeName>
</protein>
<name>RPPH_SHEB2</name>